<evidence type="ECO:0000250" key="1">
    <source>
        <dbReference type="UniProtKB" id="Q6PEV8"/>
    </source>
</evidence>
<evidence type="ECO:0000256" key="2">
    <source>
        <dbReference type="SAM" id="MobiDB-lite"/>
    </source>
</evidence>
<evidence type="ECO:0000305" key="3"/>
<gene>
    <name type="primary">Fam199x</name>
</gene>
<proteinExistence type="evidence at transcript level"/>
<keyword id="KW-0597">Phosphoprotein</keyword>
<keyword id="KW-1185">Reference proteome</keyword>
<comment type="similarity">
    <text evidence="3">Belongs to the FAM199 family.</text>
</comment>
<dbReference type="EMBL" id="AK039695">
    <property type="protein sequence ID" value="BAC30420.1"/>
    <property type="molecule type" value="mRNA"/>
</dbReference>
<dbReference type="EMBL" id="AK154624">
    <property type="protein sequence ID" value="BAE32723.1"/>
    <property type="molecule type" value="mRNA"/>
</dbReference>
<dbReference type="EMBL" id="AL954296">
    <property type="status" value="NOT_ANNOTATED_CDS"/>
    <property type="molecule type" value="Genomic_DNA"/>
</dbReference>
<dbReference type="EMBL" id="BC031748">
    <property type="protein sequence ID" value="AAH31748.1"/>
    <property type="molecule type" value="mRNA"/>
</dbReference>
<dbReference type="CCDS" id="CCDS30428.1"/>
<dbReference type="RefSeq" id="NP_666373.1">
    <property type="nucleotide sequence ID" value="NM_146261.2"/>
</dbReference>
<dbReference type="SMR" id="Q8K2D0"/>
<dbReference type="BioGRID" id="232814">
    <property type="interactions" value="4"/>
</dbReference>
<dbReference type="FunCoup" id="Q8K2D0">
    <property type="interactions" value="128"/>
</dbReference>
<dbReference type="STRING" id="10090.ENSMUSP00000045544"/>
<dbReference type="GlyGen" id="Q8K2D0">
    <property type="glycosylation" value="1 site"/>
</dbReference>
<dbReference type="iPTMnet" id="Q8K2D0"/>
<dbReference type="PhosphoSitePlus" id="Q8K2D0"/>
<dbReference type="PaxDb" id="10090-ENSMUSP00000045544"/>
<dbReference type="ProteomicsDB" id="275723"/>
<dbReference type="Antibodypedia" id="512">
    <property type="antibodies" value="8 antibodies from 7 providers"/>
</dbReference>
<dbReference type="DNASU" id="245622"/>
<dbReference type="Ensembl" id="ENSMUST00000047852.8">
    <property type="protein sequence ID" value="ENSMUSP00000045544.8"/>
    <property type="gene ID" value="ENSMUSG00000042595.8"/>
</dbReference>
<dbReference type="GeneID" id="245622"/>
<dbReference type="KEGG" id="mmu:245622"/>
<dbReference type="UCSC" id="uc009ujq.2">
    <property type="organism name" value="mouse"/>
</dbReference>
<dbReference type="AGR" id="MGI:2384304"/>
<dbReference type="CTD" id="139231"/>
<dbReference type="MGI" id="MGI:2384304">
    <property type="gene designation" value="Fam199x"/>
</dbReference>
<dbReference type="VEuPathDB" id="HostDB:ENSMUSG00000042595"/>
<dbReference type="eggNOG" id="ENOG502QR59">
    <property type="taxonomic scope" value="Eukaryota"/>
</dbReference>
<dbReference type="GeneTree" id="ENSGT00440000033895"/>
<dbReference type="HOGENOM" id="CLU_061935_0_0_1"/>
<dbReference type="InParanoid" id="Q8K2D0"/>
<dbReference type="OMA" id="PWKRSSY"/>
<dbReference type="OrthoDB" id="6365484at2759"/>
<dbReference type="PhylomeDB" id="Q8K2D0"/>
<dbReference type="BioGRID-ORCS" id="245622">
    <property type="hits" value="2 hits in 76 CRISPR screens"/>
</dbReference>
<dbReference type="ChiTaRS" id="Fam199x">
    <property type="organism name" value="mouse"/>
</dbReference>
<dbReference type="PRO" id="PR:Q8K2D0"/>
<dbReference type="Proteomes" id="UP000000589">
    <property type="component" value="Chromosome X"/>
</dbReference>
<dbReference type="RNAct" id="Q8K2D0">
    <property type="molecule type" value="protein"/>
</dbReference>
<dbReference type="Bgee" id="ENSMUSG00000042595">
    <property type="expression patterns" value="Expressed in optic fissure and 231 other cell types or tissues"/>
</dbReference>
<dbReference type="InterPro" id="IPR029672">
    <property type="entry name" value="FAM199X_fam"/>
</dbReference>
<dbReference type="PANTHER" id="PTHR32003">
    <property type="entry name" value="PROTEIN FAM199X"/>
    <property type="match status" value="1"/>
</dbReference>
<dbReference type="PANTHER" id="PTHR32003:SF1">
    <property type="entry name" value="PROTEIN FAM199X"/>
    <property type="match status" value="1"/>
</dbReference>
<dbReference type="Pfam" id="PF15814">
    <property type="entry name" value="FAM199X"/>
    <property type="match status" value="1"/>
</dbReference>
<protein>
    <recommendedName>
        <fullName>Protein FAM199X</fullName>
    </recommendedName>
</protein>
<organism>
    <name type="scientific">Mus musculus</name>
    <name type="common">Mouse</name>
    <dbReference type="NCBI Taxonomy" id="10090"/>
    <lineage>
        <taxon>Eukaryota</taxon>
        <taxon>Metazoa</taxon>
        <taxon>Chordata</taxon>
        <taxon>Craniata</taxon>
        <taxon>Vertebrata</taxon>
        <taxon>Euteleostomi</taxon>
        <taxon>Mammalia</taxon>
        <taxon>Eutheria</taxon>
        <taxon>Euarchontoglires</taxon>
        <taxon>Glires</taxon>
        <taxon>Rodentia</taxon>
        <taxon>Myomorpha</taxon>
        <taxon>Muroidea</taxon>
        <taxon>Muridae</taxon>
        <taxon>Murinae</taxon>
        <taxon>Mus</taxon>
        <taxon>Mus</taxon>
    </lineage>
</organism>
<sequence length="388" mass="42839">MSDEASATTSYEKFLTPEEPFPFLGAPRGVGTCPSEEPGCLDISDFGCQLSSCHRTDPLHRFHTNRWNLTSCGTSVASSECSEELFSSVSVGDQDDCYSLLDDQDFTSFDLFPEGSVCSDVSSSISTYWDWSDSEFEWQLPGSDIASGSDVLSDVIPSIPSSPCLVSKKKNKHRNLDELAWSAMTNDEQVEYIEYLSRKVSTEMGLREQLDIIKIIDPSAQISPTDSEFIIELNCLTDEKLKQVRNYIKEHSLRQRPTREAWKRSNFSCASTSGVSGASASASSSSASMVSSASSSGSSVGNSASNSSANMSRAHSDSNLSASAAERIRDSKKRSKQRKLQQKAFRKRQLKEQRQARKERLSGLFLNEEVLSLKVTEEDHEADVDVLM</sequence>
<name>F199X_MOUSE</name>
<feature type="chain" id="PRO_0000251211" description="Protein FAM199X">
    <location>
        <begin position="1"/>
        <end position="388"/>
    </location>
</feature>
<feature type="region of interest" description="Disordered" evidence="2">
    <location>
        <begin position="288"/>
        <end position="358"/>
    </location>
</feature>
<feature type="compositionally biased region" description="Low complexity" evidence="2">
    <location>
        <begin position="288"/>
        <end position="312"/>
    </location>
</feature>
<feature type="compositionally biased region" description="Basic residues" evidence="2">
    <location>
        <begin position="330"/>
        <end position="349"/>
    </location>
</feature>
<feature type="modified residue" description="Phosphoserine" evidence="1">
    <location>
        <position position="316"/>
    </location>
</feature>
<feature type="modified residue" description="Phosphoserine" evidence="1">
    <location>
        <position position="321"/>
    </location>
</feature>
<feature type="sequence conflict" description="In Ref. 1; BAE32723." evidence="3" ref="1">
    <original>G</original>
    <variation>E</variation>
    <location>
        <position position="301"/>
    </location>
</feature>
<accession>Q8K2D0</accession>
<accession>B1AZH1</accession>
<accession>Q3U3R2</accession>
<reference key="1">
    <citation type="journal article" date="2005" name="Science">
        <title>The transcriptional landscape of the mammalian genome.</title>
        <authorList>
            <person name="Carninci P."/>
            <person name="Kasukawa T."/>
            <person name="Katayama S."/>
            <person name="Gough J."/>
            <person name="Frith M.C."/>
            <person name="Maeda N."/>
            <person name="Oyama R."/>
            <person name="Ravasi T."/>
            <person name="Lenhard B."/>
            <person name="Wells C."/>
            <person name="Kodzius R."/>
            <person name="Shimokawa K."/>
            <person name="Bajic V.B."/>
            <person name="Brenner S.E."/>
            <person name="Batalov S."/>
            <person name="Forrest A.R."/>
            <person name="Zavolan M."/>
            <person name="Davis M.J."/>
            <person name="Wilming L.G."/>
            <person name="Aidinis V."/>
            <person name="Allen J.E."/>
            <person name="Ambesi-Impiombato A."/>
            <person name="Apweiler R."/>
            <person name="Aturaliya R.N."/>
            <person name="Bailey T.L."/>
            <person name="Bansal M."/>
            <person name="Baxter L."/>
            <person name="Beisel K.W."/>
            <person name="Bersano T."/>
            <person name="Bono H."/>
            <person name="Chalk A.M."/>
            <person name="Chiu K.P."/>
            <person name="Choudhary V."/>
            <person name="Christoffels A."/>
            <person name="Clutterbuck D.R."/>
            <person name="Crowe M.L."/>
            <person name="Dalla E."/>
            <person name="Dalrymple B.P."/>
            <person name="de Bono B."/>
            <person name="Della Gatta G."/>
            <person name="di Bernardo D."/>
            <person name="Down T."/>
            <person name="Engstrom P."/>
            <person name="Fagiolini M."/>
            <person name="Faulkner G."/>
            <person name="Fletcher C.F."/>
            <person name="Fukushima T."/>
            <person name="Furuno M."/>
            <person name="Futaki S."/>
            <person name="Gariboldi M."/>
            <person name="Georgii-Hemming P."/>
            <person name="Gingeras T.R."/>
            <person name="Gojobori T."/>
            <person name="Green R.E."/>
            <person name="Gustincich S."/>
            <person name="Harbers M."/>
            <person name="Hayashi Y."/>
            <person name="Hensch T.K."/>
            <person name="Hirokawa N."/>
            <person name="Hill D."/>
            <person name="Huminiecki L."/>
            <person name="Iacono M."/>
            <person name="Ikeo K."/>
            <person name="Iwama A."/>
            <person name="Ishikawa T."/>
            <person name="Jakt M."/>
            <person name="Kanapin A."/>
            <person name="Katoh M."/>
            <person name="Kawasawa Y."/>
            <person name="Kelso J."/>
            <person name="Kitamura H."/>
            <person name="Kitano H."/>
            <person name="Kollias G."/>
            <person name="Krishnan S.P."/>
            <person name="Kruger A."/>
            <person name="Kummerfeld S.K."/>
            <person name="Kurochkin I.V."/>
            <person name="Lareau L.F."/>
            <person name="Lazarevic D."/>
            <person name="Lipovich L."/>
            <person name="Liu J."/>
            <person name="Liuni S."/>
            <person name="McWilliam S."/>
            <person name="Madan Babu M."/>
            <person name="Madera M."/>
            <person name="Marchionni L."/>
            <person name="Matsuda H."/>
            <person name="Matsuzawa S."/>
            <person name="Miki H."/>
            <person name="Mignone F."/>
            <person name="Miyake S."/>
            <person name="Morris K."/>
            <person name="Mottagui-Tabar S."/>
            <person name="Mulder N."/>
            <person name="Nakano N."/>
            <person name="Nakauchi H."/>
            <person name="Ng P."/>
            <person name="Nilsson R."/>
            <person name="Nishiguchi S."/>
            <person name="Nishikawa S."/>
            <person name="Nori F."/>
            <person name="Ohara O."/>
            <person name="Okazaki Y."/>
            <person name="Orlando V."/>
            <person name="Pang K.C."/>
            <person name="Pavan W.J."/>
            <person name="Pavesi G."/>
            <person name="Pesole G."/>
            <person name="Petrovsky N."/>
            <person name="Piazza S."/>
            <person name="Reed J."/>
            <person name="Reid J.F."/>
            <person name="Ring B.Z."/>
            <person name="Ringwald M."/>
            <person name="Rost B."/>
            <person name="Ruan Y."/>
            <person name="Salzberg S.L."/>
            <person name="Sandelin A."/>
            <person name="Schneider C."/>
            <person name="Schoenbach C."/>
            <person name="Sekiguchi K."/>
            <person name="Semple C.A."/>
            <person name="Seno S."/>
            <person name="Sessa L."/>
            <person name="Sheng Y."/>
            <person name="Shibata Y."/>
            <person name="Shimada H."/>
            <person name="Shimada K."/>
            <person name="Silva D."/>
            <person name="Sinclair B."/>
            <person name="Sperling S."/>
            <person name="Stupka E."/>
            <person name="Sugiura K."/>
            <person name="Sultana R."/>
            <person name="Takenaka Y."/>
            <person name="Taki K."/>
            <person name="Tammoja K."/>
            <person name="Tan S.L."/>
            <person name="Tang S."/>
            <person name="Taylor M.S."/>
            <person name="Tegner J."/>
            <person name="Teichmann S.A."/>
            <person name="Ueda H.R."/>
            <person name="van Nimwegen E."/>
            <person name="Verardo R."/>
            <person name="Wei C.L."/>
            <person name="Yagi K."/>
            <person name="Yamanishi H."/>
            <person name="Zabarovsky E."/>
            <person name="Zhu S."/>
            <person name="Zimmer A."/>
            <person name="Hide W."/>
            <person name="Bult C."/>
            <person name="Grimmond S.M."/>
            <person name="Teasdale R.D."/>
            <person name="Liu E.T."/>
            <person name="Brusic V."/>
            <person name="Quackenbush J."/>
            <person name="Wahlestedt C."/>
            <person name="Mattick J.S."/>
            <person name="Hume D.A."/>
            <person name="Kai C."/>
            <person name="Sasaki D."/>
            <person name="Tomaru Y."/>
            <person name="Fukuda S."/>
            <person name="Kanamori-Katayama M."/>
            <person name="Suzuki M."/>
            <person name="Aoki J."/>
            <person name="Arakawa T."/>
            <person name="Iida J."/>
            <person name="Imamura K."/>
            <person name="Itoh M."/>
            <person name="Kato T."/>
            <person name="Kawaji H."/>
            <person name="Kawagashira N."/>
            <person name="Kawashima T."/>
            <person name="Kojima M."/>
            <person name="Kondo S."/>
            <person name="Konno H."/>
            <person name="Nakano K."/>
            <person name="Ninomiya N."/>
            <person name="Nishio T."/>
            <person name="Okada M."/>
            <person name="Plessy C."/>
            <person name="Shibata K."/>
            <person name="Shiraki T."/>
            <person name="Suzuki S."/>
            <person name="Tagami M."/>
            <person name="Waki K."/>
            <person name="Watahiki A."/>
            <person name="Okamura-Oho Y."/>
            <person name="Suzuki H."/>
            <person name="Kawai J."/>
            <person name="Hayashizaki Y."/>
        </authorList>
    </citation>
    <scope>NUCLEOTIDE SEQUENCE [LARGE SCALE MRNA]</scope>
    <source>
        <strain>C57BL/6J</strain>
        <strain>NOD</strain>
        <tissue>Dendritic cell</tissue>
        <tissue>Spinal cord</tissue>
    </source>
</reference>
<reference key="2">
    <citation type="journal article" date="2009" name="PLoS Biol.">
        <title>Lineage-specific biology revealed by a finished genome assembly of the mouse.</title>
        <authorList>
            <person name="Church D.M."/>
            <person name="Goodstadt L."/>
            <person name="Hillier L.W."/>
            <person name="Zody M.C."/>
            <person name="Goldstein S."/>
            <person name="She X."/>
            <person name="Bult C.J."/>
            <person name="Agarwala R."/>
            <person name="Cherry J.L."/>
            <person name="DiCuccio M."/>
            <person name="Hlavina W."/>
            <person name="Kapustin Y."/>
            <person name="Meric P."/>
            <person name="Maglott D."/>
            <person name="Birtle Z."/>
            <person name="Marques A.C."/>
            <person name="Graves T."/>
            <person name="Zhou S."/>
            <person name="Teague B."/>
            <person name="Potamousis K."/>
            <person name="Churas C."/>
            <person name="Place M."/>
            <person name="Herschleb J."/>
            <person name="Runnheim R."/>
            <person name="Forrest D."/>
            <person name="Amos-Landgraf J."/>
            <person name="Schwartz D.C."/>
            <person name="Cheng Z."/>
            <person name="Lindblad-Toh K."/>
            <person name="Eichler E.E."/>
            <person name="Ponting C.P."/>
        </authorList>
    </citation>
    <scope>NUCLEOTIDE SEQUENCE [LARGE SCALE GENOMIC DNA]</scope>
    <source>
        <strain>C57BL/6J</strain>
    </source>
</reference>
<reference key="3">
    <citation type="journal article" date="2004" name="Genome Res.">
        <title>The status, quality, and expansion of the NIH full-length cDNA project: the Mammalian Gene Collection (MGC).</title>
        <authorList>
            <consortium name="The MGC Project Team"/>
        </authorList>
    </citation>
    <scope>NUCLEOTIDE SEQUENCE [LARGE SCALE MRNA]</scope>
    <source>
        <strain>FVB/N</strain>
        <tissue>Mammary tumor</tissue>
    </source>
</reference>